<proteinExistence type="evidence at protein level"/>
<name>ANOA_ASPNO</name>
<protein>
    <recommendedName>
        <fullName evidence="4">Arginine-containing cyclodipeptide synthase anoA</fullName>
        <shortName evidence="4">RCDPS anoA</shortName>
        <ecNumber evidence="3">6.3.2.-</ecNumber>
    </recommendedName>
</protein>
<organism>
    <name type="scientific">Aspergillus nomiae</name>
    <name type="common">Aspergillus nomius</name>
    <dbReference type="NCBI Taxonomy" id="41061"/>
    <lineage>
        <taxon>Eukaryota</taxon>
        <taxon>Fungi</taxon>
        <taxon>Dikarya</taxon>
        <taxon>Ascomycota</taxon>
        <taxon>Pezizomycotina</taxon>
        <taxon>Eurotiomycetes</taxon>
        <taxon>Eurotiomycetidae</taxon>
        <taxon>Eurotiales</taxon>
        <taxon>Aspergillaceae</taxon>
        <taxon>Aspergillus</taxon>
        <taxon>Aspergillus subgen. Circumdati</taxon>
    </lineage>
</organism>
<keyword id="KW-0436">Ligase</keyword>
<accession>P9WEK0</accession>
<comment type="function">
    <text evidence="3 6">Arginine-containing cyclodipeptide synthase; part of the cluster that mediates the biosynthesis of a highly modified cyclo-arginine-tryptophan dipeptide (cRW) (PubMed:36702957). Within the pathway, AnoA acts as the scaffold-generating enzyme and is responsible for formation of the cyclo-Arg-Trp diketopiperazine (cRW) from L-arginyl-tRNA(Arg) + L-tryptophanyl-tRNA(Trp) (PubMed:36702957). Additional enzymes from the cluster then further modify the cyclo-Arg-Asp diketopiperazine (cRW) scaffold (Probable).</text>
</comment>
<comment type="catalytic activity">
    <reaction evidence="3">
        <text>L-tryptophyl-tRNA(Trp) + L-arginyl-tRNA(Arg) = cyclo(L-arginyl-L-tryptophyl) + tRNA(Trp) + tRNA(Arg) + H(+)</text>
        <dbReference type="Rhea" id="RHEA:80411"/>
        <dbReference type="Rhea" id="RHEA-COMP:9658"/>
        <dbReference type="Rhea" id="RHEA-COMP:9671"/>
        <dbReference type="Rhea" id="RHEA-COMP:9673"/>
        <dbReference type="Rhea" id="RHEA-COMP:9705"/>
        <dbReference type="ChEBI" id="CHEBI:15378"/>
        <dbReference type="ChEBI" id="CHEBI:78442"/>
        <dbReference type="ChEBI" id="CHEBI:78513"/>
        <dbReference type="ChEBI" id="CHEBI:78535"/>
        <dbReference type="ChEBI" id="CHEBI:231323"/>
    </reaction>
    <physiologicalReaction direction="left-to-right" evidence="3">
        <dbReference type="Rhea" id="RHEA:80412"/>
    </physiologicalReaction>
</comment>
<comment type="pathway">
    <text evidence="3">Secondary metabolite biosynthesis.</text>
</comment>
<comment type="domain">
    <text evidence="1">The conserved DDXXE motif is essential for catalytic activity.</text>
</comment>
<comment type="similarity">
    <text evidence="5">Belongs to the arginine-containing cyclodipeptide synthase family.</text>
</comment>
<sequence>MMGAVQLPVETEACLHDDAASRPISDSNTVRVAVLRQHQYHSSVTYHRLDDNRLIPGVVGYSYLRDIADEGKKQSPSKQHARVIQAYSKIHSLLSPPREPGPIDSETKTREKKSSPVIVHDKRCAFIERLEPPPNSKADIVNTVFAQVNLRTPVGPPLDQFVNCRSSNIKINDLKDSANGLCRPITISTGICLFSSRLLGFIPTNGLSTTDGATETVIPPLPYSADATFYELETCARMAMTIAGLAVTAGTGGTAGSRPIVVRLDVPCLQYYCYPLELLQAGLVSWKYVQEWFRLVDRRHRQVAGLLKDTITHEVLRRGGDIQVEVTAGTIAATQLLRLSVFDRMELPSVDDILFVLKWVGPYQAAWREFLDILDDCQRPKDLRSVALMAYVFEVMYPALHQIATKSLHGNGEKSGRPLLIQVDDIAEWRIFDHAEKLLKRFKERQHGFYPLLVGVFPSPRIFTSEDQGRSTLFLHDPGLKILQTRSPSSNSEEGSCVVRPLDIIGQIYGREVQDTLGQLTRKHGLSAADGPESD</sequence>
<gene>
    <name evidence="4" type="primary">anoA</name>
</gene>
<dbReference type="EC" id="6.3.2.-" evidence="3"/>
<dbReference type="GO" id="GO:0016874">
    <property type="term" value="F:ligase activity"/>
    <property type="evidence" value="ECO:0007669"/>
    <property type="project" value="UniProtKB-KW"/>
</dbReference>
<reference key="1">
    <citation type="journal article" date="2023" name="Nat. Chem. Biol.">
        <title>Genome mining for unknown-unknown natural products.</title>
        <authorList>
            <person name="Yee D.A."/>
            <person name="Niwa K."/>
            <person name="Perlatti B."/>
            <person name="Chen M."/>
            <person name="Li Y."/>
            <person name="Tang Y."/>
        </authorList>
    </citation>
    <scope>NUCLEOTIDE SEQUENCE [MRNA]</scope>
    <scope>FUNCTION</scope>
    <scope>CATALYTIC ACTIVITY</scope>
    <scope>PATHWAY</scope>
</reference>
<feature type="chain" id="PRO_0000461002" description="Arginine-containing cyclodipeptide synthase anoA">
    <location>
        <begin position="1"/>
        <end position="535"/>
    </location>
</feature>
<feature type="region of interest" description="Disordered" evidence="2">
    <location>
        <begin position="93"/>
        <end position="114"/>
    </location>
</feature>
<feature type="short sequence motif" description="Conserved DDXXE motif" evidence="1">
    <location>
        <begin position="424"/>
        <end position="428"/>
    </location>
</feature>
<feature type="compositionally biased region" description="Basic and acidic residues" evidence="2">
    <location>
        <begin position="105"/>
        <end position="114"/>
    </location>
</feature>
<evidence type="ECO:0000250" key="1">
    <source>
        <dbReference type="UniProtKB" id="P9WEJ7"/>
    </source>
</evidence>
<evidence type="ECO:0000256" key="2">
    <source>
        <dbReference type="SAM" id="MobiDB-lite"/>
    </source>
</evidence>
<evidence type="ECO:0000269" key="3">
    <source>
    </source>
</evidence>
<evidence type="ECO:0000303" key="4">
    <source>
    </source>
</evidence>
<evidence type="ECO:0000305" key="5"/>
<evidence type="ECO:0000305" key="6">
    <source>
    </source>
</evidence>